<gene>
    <name type="ORF">ORF IV</name>
</gene>
<name>CAPSD_CAMVE</name>
<protein>
    <recommendedName>
        <fullName>Capsid protein</fullName>
        <shortName>CP</shortName>
    </recommendedName>
    <alternativeName>
        <fullName>Coat protein</fullName>
    </alternativeName>
</protein>
<keyword id="KW-0167">Capsid protein</keyword>
<keyword id="KW-1048">Host nucleus</keyword>
<keyword id="KW-0479">Metal-binding</keyword>
<keyword id="KW-1145">T=7 icosahedral capsid protein</keyword>
<keyword id="KW-1163">Viral penetration into host nucleus</keyword>
<keyword id="KW-0946">Virion</keyword>
<keyword id="KW-1160">Virus entry into host cell</keyword>
<keyword id="KW-0862">Zinc</keyword>
<keyword id="KW-0863">Zinc-finger</keyword>
<organismHost>
    <name type="scientific">Arabidopsis thaliana</name>
    <name type="common">Mouse-ear cress</name>
    <dbReference type="NCBI Taxonomy" id="3702"/>
</organismHost>
<organismHost>
    <name type="scientific">Brassica</name>
    <dbReference type="NCBI Taxonomy" id="3705"/>
</organismHost>
<organismHost>
    <name type="scientific">Raphanus</name>
    <dbReference type="NCBI Taxonomy" id="3725"/>
</organismHost>
<feature type="chain" id="PRO_0000222031" description="Capsid protein">
    <location>
        <begin position="1"/>
        <end position="488"/>
    </location>
</feature>
<feature type="zinc finger region" description="CCHC-type; degenerate">
    <location>
        <begin position="411"/>
        <end position="428"/>
    </location>
</feature>
<feature type="region of interest" description="Disordered" evidence="2">
    <location>
        <begin position="79"/>
        <end position="142"/>
    </location>
</feature>
<feature type="region of interest" description="Disordered" evidence="2">
    <location>
        <begin position="464"/>
        <end position="488"/>
    </location>
</feature>
<feature type="short sequence motif" description="Nuclear localization signal" evidence="1">
    <location>
        <begin position="121"/>
        <end position="124"/>
    </location>
</feature>
<feature type="compositionally biased region" description="Acidic residues" evidence="2">
    <location>
        <begin position="80"/>
        <end position="93"/>
    </location>
</feature>
<feature type="compositionally biased region" description="Basic and acidic residues" evidence="2">
    <location>
        <begin position="94"/>
        <end position="130"/>
    </location>
</feature>
<feature type="compositionally biased region" description="Acidic residues" evidence="2">
    <location>
        <begin position="465"/>
        <end position="488"/>
    </location>
</feature>
<sequence>MAESILDRTINRFWYNLGEDCLSESQFDLMIRLMEESLDGDQIIDLTSLPSDNLQVEQVMTTTDDSISEESEFLLAIGETSEDESDSGEEPEFEQVRMDRTGGTEIPKKEDGAEPSRYNERKRKTTEDRYFPTQPKTIPGQKQTSMGILNIDCQTNRRTLIDDWAAEIGLIVKTNREDYLDPETILLLMEHKTSGIAKELIRNTRWNRTTGDIIEQVIDAMYTMFLGLNYSDNKVAEKIDEQEKAKIRMTKLQLCDICYLEEFTCDYEKNMYKTELADFPGYINQYLSKIPIIGEKALTRFRHEANGTSIYSLGFAAKIVKEELSKICALSKKQKKLKKFNKKCCSIGEASVEYGCKKTSKKKYHNKRYKKKYKVYKPYKKKKKFRSGKYFKPKEKKGSKQKYCPKGKKDCRCWISNIEGHYANECPNRQSSEKAHILQQAEKLGLQPIEEPYEGVQEVFILEYKEEEEETSTEESDGSSTSEDSDSD</sequence>
<organism>
    <name type="scientific">Cauliflower mosaic virus (strain BBC)</name>
    <name type="common">CaMV</name>
    <dbReference type="NCBI Taxonomy" id="31556"/>
    <lineage>
        <taxon>Viruses</taxon>
        <taxon>Riboviria</taxon>
        <taxon>Pararnavirae</taxon>
        <taxon>Artverviricota</taxon>
        <taxon>Revtraviricetes</taxon>
        <taxon>Ortervirales</taxon>
        <taxon>Caulimoviridae</taxon>
        <taxon>Caulimovirus</taxon>
        <taxon>Caulimovirus tessellobrassicae</taxon>
    </lineage>
</organism>
<accession>Q02951</accession>
<reference key="1">
    <citation type="journal article" date="1993" name="Gene">
        <title>The complete nucleotide sequence of cauliflower mosaic virus isolate BBC.</title>
        <authorList>
            <person name="Chenault K.D."/>
            <person name="Melcher U.K."/>
        </authorList>
    </citation>
    <scope>NUCLEOTIDE SEQUENCE [GENOMIC DNA]</scope>
</reference>
<proteinExistence type="inferred from homology"/>
<dbReference type="EMBL" id="M90542">
    <property type="protein sequence ID" value="AAA62374.1"/>
    <property type="molecule type" value="Genomic_DNA"/>
</dbReference>
<dbReference type="PIR" id="JN0496">
    <property type="entry name" value="JN0496"/>
</dbReference>
<dbReference type="Proteomes" id="UP000008440">
    <property type="component" value="Genome"/>
</dbReference>
<dbReference type="GO" id="GO:0043657">
    <property type="term" value="C:host cell"/>
    <property type="evidence" value="ECO:0007669"/>
    <property type="project" value="GOC"/>
</dbReference>
<dbReference type="GO" id="GO:0042025">
    <property type="term" value="C:host cell nucleus"/>
    <property type="evidence" value="ECO:0007669"/>
    <property type="project" value="UniProtKB-SubCell"/>
</dbReference>
<dbReference type="GO" id="GO:0039620">
    <property type="term" value="C:T=7 icosahedral viral capsid"/>
    <property type="evidence" value="ECO:0007669"/>
    <property type="project" value="UniProtKB-KW"/>
</dbReference>
<dbReference type="GO" id="GO:0005198">
    <property type="term" value="F:structural molecule activity"/>
    <property type="evidence" value="ECO:0007669"/>
    <property type="project" value="InterPro"/>
</dbReference>
<dbReference type="GO" id="GO:0008270">
    <property type="term" value="F:zinc ion binding"/>
    <property type="evidence" value="ECO:0007669"/>
    <property type="project" value="UniProtKB-KW"/>
</dbReference>
<dbReference type="GO" id="GO:0046718">
    <property type="term" value="P:symbiont entry into host cell"/>
    <property type="evidence" value="ECO:0007669"/>
    <property type="project" value="UniProtKB-KW"/>
</dbReference>
<dbReference type="GO" id="GO:0075732">
    <property type="term" value="P:viral penetration into host nucleus"/>
    <property type="evidence" value="ECO:0007669"/>
    <property type="project" value="UniProtKB-KW"/>
</dbReference>
<dbReference type="InterPro" id="IPR001988">
    <property type="entry name" value="Caulimo_coat"/>
</dbReference>
<dbReference type="Pfam" id="PF22909">
    <property type="entry name" value="Caulimovir_coat_dom"/>
    <property type="match status" value="1"/>
</dbReference>
<dbReference type="PRINTS" id="PR00221">
    <property type="entry name" value="CAULIMOCOAT"/>
</dbReference>
<evidence type="ECO:0000250" key="1"/>
<evidence type="ECO:0000256" key="2">
    <source>
        <dbReference type="SAM" id="MobiDB-lite"/>
    </source>
</evidence>
<evidence type="ECO:0000305" key="3"/>
<comment type="function">
    <text evidence="1">Self assembles to form an icosahedral capsid, about 50 nm in diameter, nm, composed of 420 subunits of the viral capsid protein. The capsid encapsulates the genomic dsDNA. Following virus entry into host cell, provides nuclear import of the viral genome. Virus particles do not enter the nucleus, but dock at the nuclear membrane through the interaction with host importins (By similarity).</text>
</comment>
<comment type="subunit">
    <text evidence="1">Interacts (via nuclear localization signal) with host importin alpha.</text>
</comment>
<comment type="subcellular location">
    <subcellularLocation>
        <location evidence="3">Virion</location>
    </subcellularLocation>
    <subcellularLocation>
        <location evidence="3">Host nucleus</location>
    </subcellularLocation>
</comment>
<comment type="similarity">
    <text evidence="3">Belongs to the caulimoviridae capsid protein family.</text>
</comment>